<gene>
    <name type="primary">MT-ND4L</name>
    <name type="synonym">MTND4L</name>
    <name type="synonym">NADH4L</name>
    <name type="synonym">ND4L</name>
</gene>
<protein>
    <recommendedName>
        <fullName>NADH-ubiquinone oxidoreductase chain 4L</fullName>
        <ecNumber>7.1.1.2</ecNumber>
    </recommendedName>
    <alternativeName>
        <fullName>NADH dehydrogenase subunit 4L</fullName>
    </alternativeName>
</protein>
<accession>P69303</accession>
<accession>P11630</accession>
<organism>
    <name type="scientific">Oncorhynchus gorbuscha</name>
    <name type="common">Pink salmon</name>
    <name type="synonym">Salmo gorbuscha</name>
    <dbReference type="NCBI Taxonomy" id="8017"/>
    <lineage>
        <taxon>Eukaryota</taxon>
        <taxon>Metazoa</taxon>
        <taxon>Chordata</taxon>
        <taxon>Craniata</taxon>
        <taxon>Vertebrata</taxon>
        <taxon>Euteleostomi</taxon>
        <taxon>Actinopterygii</taxon>
        <taxon>Neopterygii</taxon>
        <taxon>Teleostei</taxon>
        <taxon>Protacanthopterygii</taxon>
        <taxon>Salmoniformes</taxon>
        <taxon>Salmonidae</taxon>
        <taxon>Salmoninae</taxon>
        <taxon>Oncorhynchus</taxon>
    </lineage>
</organism>
<sequence>MTPVHFSFTSAFILGLMGLAFHRTHLLSALLCLEGMMLSLFIALSLWALQMEATGYSVAPMLLLAFSACEASAGLALLVATARTHGTDRLQSLNLLQC</sequence>
<geneLocation type="mitochondrion"/>
<evidence type="ECO:0000250" key="1"/>
<evidence type="ECO:0000250" key="2">
    <source>
        <dbReference type="UniProtKB" id="P03901"/>
    </source>
</evidence>
<evidence type="ECO:0000255" key="3"/>
<evidence type="ECO:0000305" key="4"/>
<name>NU4LM_ONCGO</name>
<reference key="1">
    <citation type="journal article" date="1989" name="J. Mol. Evol.">
        <title>Variation in salmonid mitochondrial DNA: evolutionary constraints and mechanisms of substitution.</title>
        <authorList>
            <person name="Thomas W.K."/>
            <person name="Beckenbach A.T."/>
        </authorList>
    </citation>
    <scope>NUCLEOTIDE SEQUENCE OF 1-92</scope>
</reference>
<comment type="function">
    <text evidence="2">Core subunit of the mitochondrial membrane respiratory chain NADH dehydrogenase (Complex I) which catalyzes electron transfer from NADH through the respiratory chain, using ubiquinone as an electron acceptor. Part of the enzyme membrane arm which is embedded in the lipid bilayer and involved in proton translocation.</text>
</comment>
<comment type="catalytic activity">
    <reaction evidence="2">
        <text>a ubiquinone + NADH + 5 H(+)(in) = a ubiquinol + NAD(+) + 4 H(+)(out)</text>
        <dbReference type="Rhea" id="RHEA:29091"/>
        <dbReference type="Rhea" id="RHEA-COMP:9565"/>
        <dbReference type="Rhea" id="RHEA-COMP:9566"/>
        <dbReference type="ChEBI" id="CHEBI:15378"/>
        <dbReference type="ChEBI" id="CHEBI:16389"/>
        <dbReference type="ChEBI" id="CHEBI:17976"/>
        <dbReference type="ChEBI" id="CHEBI:57540"/>
        <dbReference type="ChEBI" id="CHEBI:57945"/>
        <dbReference type="EC" id="7.1.1.2"/>
    </reaction>
    <physiologicalReaction direction="left-to-right" evidence="2">
        <dbReference type="Rhea" id="RHEA:29092"/>
    </physiologicalReaction>
</comment>
<comment type="subcellular location">
    <subcellularLocation>
        <location evidence="1">Mitochondrion membrane</location>
        <topology evidence="1">Multi-pass membrane protein</topology>
    </subcellularLocation>
</comment>
<comment type="similarity">
    <text evidence="4">Belongs to the complex I subunit 4L family.</text>
</comment>
<feature type="chain" id="PRO_0000118456" description="NADH-ubiquinone oxidoreductase chain 4L">
    <location>
        <begin position="1"/>
        <end position="98"/>
    </location>
</feature>
<feature type="transmembrane region" description="Helical" evidence="3">
    <location>
        <begin position="1"/>
        <end position="21"/>
    </location>
</feature>
<feature type="transmembrane region" description="Helical" evidence="3">
    <location>
        <begin position="29"/>
        <end position="49"/>
    </location>
</feature>
<feature type="transmembrane region" description="Helical" evidence="3">
    <location>
        <begin position="58"/>
        <end position="78"/>
    </location>
</feature>
<keyword id="KW-0249">Electron transport</keyword>
<keyword id="KW-0472">Membrane</keyword>
<keyword id="KW-0496">Mitochondrion</keyword>
<keyword id="KW-0520">NAD</keyword>
<keyword id="KW-0679">Respiratory chain</keyword>
<keyword id="KW-1278">Translocase</keyword>
<keyword id="KW-0812">Transmembrane</keyword>
<keyword id="KW-1133">Transmembrane helix</keyword>
<keyword id="KW-0813">Transport</keyword>
<keyword id="KW-0830">Ubiquinone</keyword>
<proteinExistence type="inferred from homology"/>
<dbReference type="EC" id="7.1.1.2"/>
<dbReference type="PIR" id="D30401">
    <property type="entry name" value="D30401"/>
</dbReference>
<dbReference type="RefSeq" id="YP_001974509.1">
    <property type="nucleotide sequence ID" value="NC_010959.1"/>
</dbReference>
<dbReference type="SMR" id="P69303"/>
<dbReference type="GeneID" id="6383210"/>
<dbReference type="KEGG" id="ogo:6383210"/>
<dbReference type="CTD" id="4539"/>
<dbReference type="OrthoDB" id="490049at7898"/>
<dbReference type="GO" id="GO:0031966">
    <property type="term" value="C:mitochondrial membrane"/>
    <property type="evidence" value="ECO:0007669"/>
    <property type="project" value="UniProtKB-SubCell"/>
</dbReference>
<dbReference type="GO" id="GO:0045271">
    <property type="term" value="C:respiratory chain complex I"/>
    <property type="evidence" value="ECO:0000250"/>
    <property type="project" value="UniProtKB"/>
</dbReference>
<dbReference type="GO" id="GO:0008137">
    <property type="term" value="F:NADH dehydrogenase (ubiquinone) activity"/>
    <property type="evidence" value="ECO:0000250"/>
    <property type="project" value="UniProtKB"/>
</dbReference>
<dbReference type="GO" id="GO:0042773">
    <property type="term" value="P:ATP synthesis coupled electron transport"/>
    <property type="evidence" value="ECO:0007669"/>
    <property type="project" value="InterPro"/>
</dbReference>
<dbReference type="FunFam" id="1.10.287.3510:FF:000002">
    <property type="entry name" value="NADH-ubiquinone oxidoreductase chain 4L"/>
    <property type="match status" value="1"/>
</dbReference>
<dbReference type="Gene3D" id="1.10.287.3510">
    <property type="match status" value="1"/>
</dbReference>
<dbReference type="InterPro" id="IPR001133">
    <property type="entry name" value="NADH_UbQ_OxRdtase_chain4L/K"/>
</dbReference>
<dbReference type="InterPro" id="IPR039428">
    <property type="entry name" value="NUOK/Mnh_C1-like"/>
</dbReference>
<dbReference type="PANTHER" id="PTHR11434:SF0">
    <property type="entry name" value="NADH-UBIQUINONE OXIDOREDUCTASE CHAIN 4L"/>
    <property type="match status" value="1"/>
</dbReference>
<dbReference type="PANTHER" id="PTHR11434">
    <property type="entry name" value="NADH-UBIQUINONE OXIDOREDUCTASE SUBUNIT ND4L"/>
    <property type="match status" value="1"/>
</dbReference>
<dbReference type="Pfam" id="PF00420">
    <property type="entry name" value="Oxidored_q2"/>
    <property type="match status" value="1"/>
</dbReference>